<protein>
    <recommendedName>
        <fullName evidence="4">Phosphonopyruvate decarboxylase</fullName>
        <shortName evidence="4">PnPy decarboxylase</shortName>
        <ecNumber evidence="2">4.1.1.82</ecNumber>
    </recommendedName>
</protein>
<gene>
    <name evidence="3" type="primary">bcpC</name>
</gene>
<feature type="chain" id="PRO_0000090841" description="Phosphonopyruvate decarboxylase">
    <location>
        <begin position="1"/>
        <end position="401"/>
    </location>
</feature>
<feature type="region of interest" description="Disordered" evidence="1">
    <location>
        <begin position="382"/>
        <end position="401"/>
    </location>
</feature>
<feature type="compositionally biased region" description="Low complexity" evidence="1">
    <location>
        <begin position="384"/>
        <end position="401"/>
    </location>
</feature>
<proteinExistence type="evidence at protein level"/>
<organism>
    <name type="scientific">Streptomyces hygroscopicus</name>
    <dbReference type="NCBI Taxonomy" id="1912"/>
    <lineage>
        <taxon>Bacteria</taxon>
        <taxon>Bacillati</taxon>
        <taxon>Actinomycetota</taxon>
        <taxon>Actinomycetes</taxon>
        <taxon>Kitasatosporales</taxon>
        <taxon>Streptomycetaceae</taxon>
        <taxon>Streptomyces</taxon>
        <taxon>Streptomyces violaceusniger group</taxon>
    </lineage>
</organism>
<evidence type="ECO:0000256" key="1">
    <source>
        <dbReference type="SAM" id="MobiDB-lite"/>
    </source>
</evidence>
<evidence type="ECO:0000269" key="2">
    <source>
    </source>
</evidence>
<evidence type="ECO:0000303" key="3">
    <source>
    </source>
</evidence>
<evidence type="ECO:0000303" key="4">
    <source>
    </source>
</evidence>
<evidence type="ECO:0000305" key="5"/>
<evidence type="ECO:0000305" key="6">
    <source>
    </source>
</evidence>
<name>PPD_STRHY</name>
<accession>Q54271</accession>
<keyword id="KW-0045">Antibiotic biosynthesis</keyword>
<keyword id="KW-0210">Decarboxylase</keyword>
<keyword id="KW-0456">Lyase</keyword>
<keyword id="KW-0460">Magnesium</keyword>
<keyword id="KW-0786">Thiamine pyrophosphate</keyword>
<sequence length="401" mass="41629">MISASDMLAGLTGLGVTTVAGVPCSYLTPLINRVISDRATRYLTVTQEGEAAAVAAGSWLGGGLGCAITQNSGLGNMTNPLTSLLHPARIPAVVISTWRGRPGEKDEPQHHLMGRVTGDLFGLCDMEWSLLPDTPDALRGEFDVCREALARRELPYGFLLPQGVIADEPLDEEAPRSRAGRLVRHARTGPSDAAPTRVAALERLLAELPPAAAVVSTTGKTSRELYTLDDRDQHFYMVGAMGSAATVGLGVALHTPRPVVVVDGDGSALMRLGSLATVAAHAPGNLVHLILDNGVHDSTGGQRTLSSAVDLPAVAAACGYRAVHACGSLDDLTTALAGALATDGPTLIHLPIRPGSLAALGRPKVQPHEVARRFREFATEPWPASAVGSGTRAAAGSAGDR</sequence>
<comment type="function">
    <text evidence="2">Involved in the biosynthesis of phosphinothricin tripeptide (PTT), also known as bialaphos (BA), a natural-product antibiotic and potent herbicide (PubMed:9127192). Catalyzes the decarboxylation of phosphonopyruvate (PnPy) to generate phosphonoacetaldehyde (PnAA) (PubMed:9127192).</text>
</comment>
<comment type="catalytic activity">
    <reaction evidence="2">
        <text>3-phosphonopyruvate + H(+) = phosphonoacetaldehyde + CO2</text>
        <dbReference type="Rhea" id="RHEA:20768"/>
        <dbReference type="ChEBI" id="CHEBI:15378"/>
        <dbReference type="ChEBI" id="CHEBI:16526"/>
        <dbReference type="ChEBI" id="CHEBI:58383"/>
        <dbReference type="ChEBI" id="CHEBI:71402"/>
        <dbReference type="EC" id="4.1.1.82"/>
    </reaction>
    <physiologicalReaction direction="left-to-right" evidence="2">
        <dbReference type="Rhea" id="RHEA:20769"/>
    </physiologicalReaction>
</comment>
<comment type="cofactor">
    <cofactor evidence="2">
        <name>thiamine diphosphate</name>
        <dbReference type="ChEBI" id="CHEBI:58937"/>
    </cofactor>
</comment>
<comment type="cofactor">
    <cofactor evidence="2">
        <name>Mg(2+)</name>
        <dbReference type="ChEBI" id="CHEBI:18420"/>
    </cofactor>
</comment>
<comment type="pathway">
    <text evidence="2 6">Secondary metabolite biosynthesis; bialaphos biosynthesis.</text>
</comment>
<comment type="similarity">
    <text evidence="5">Belongs to the TPP enzyme family.</text>
</comment>
<dbReference type="EC" id="4.1.1.82" evidence="2"/>
<dbReference type="EMBL" id="D37809">
    <property type="protein sequence ID" value="BAA07055.2"/>
    <property type="molecule type" value="Genomic_DNA"/>
</dbReference>
<dbReference type="SMR" id="Q54271"/>
<dbReference type="KEGG" id="ag:BAA07055"/>
<dbReference type="BRENDA" id="4.1.1.82">
    <property type="organism ID" value="6043"/>
</dbReference>
<dbReference type="UniPathway" id="UPA00197"/>
<dbReference type="GO" id="GO:0000287">
    <property type="term" value="F:magnesium ion binding"/>
    <property type="evidence" value="ECO:0007669"/>
    <property type="project" value="UniProtKB-ARBA"/>
</dbReference>
<dbReference type="GO" id="GO:0033980">
    <property type="term" value="F:phosphonopyruvate decarboxylase activity"/>
    <property type="evidence" value="ECO:0007669"/>
    <property type="project" value="UniProtKB-EC"/>
</dbReference>
<dbReference type="GO" id="GO:0030976">
    <property type="term" value="F:thiamine pyrophosphate binding"/>
    <property type="evidence" value="ECO:0007669"/>
    <property type="project" value="InterPro"/>
</dbReference>
<dbReference type="GO" id="GO:0017000">
    <property type="term" value="P:antibiotic biosynthetic process"/>
    <property type="evidence" value="ECO:0007669"/>
    <property type="project" value="UniProtKB-KW"/>
</dbReference>
<dbReference type="GO" id="GO:0032923">
    <property type="term" value="P:organic phosphonate biosynthetic process"/>
    <property type="evidence" value="ECO:0007669"/>
    <property type="project" value="InterPro"/>
</dbReference>
<dbReference type="CDD" id="cd03371">
    <property type="entry name" value="TPP_PpyrDC"/>
    <property type="match status" value="1"/>
</dbReference>
<dbReference type="CDD" id="cd07035">
    <property type="entry name" value="TPP_PYR_POX_like"/>
    <property type="match status" value="1"/>
</dbReference>
<dbReference type="Gene3D" id="3.40.50.970">
    <property type="match status" value="2"/>
</dbReference>
<dbReference type="InterPro" id="IPR017684">
    <property type="entry name" value="Phosphono-pyrv_decarboxylase"/>
</dbReference>
<dbReference type="InterPro" id="IPR029061">
    <property type="entry name" value="THDP-binding"/>
</dbReference>
<dbReference type="InterPro" id="IPR012001">
    <property type="entry name" value="Thiamin_PyroP_enz_TPP-bd_dom"/>
</dbReference>
<dbReference type="InterPro" id="IPR051818">
    <property type="entry name" value="TPP_dependent_decarboxylase"/>
</dbReference>
<dbReference type="InterPro" id="IPR011766">
    <property type="entry name" value="TPP_enzyme_TPP-bd"/>
</dbReference>
<dbReference type="NCBIfam" id="TIGR03297">
    <property type="entry name" value="Ppyr-DeCO2ase"/>
    <property type="match status" value="1"/>
</dbReference>
<dbReference type="PANTHER" id="PTHR42818:SF1">
    <property type="entry name" value="SULFOPYRUVATE DECARBOXYLASE"/>
    <property type="match status" value="1"/>
</dbReference>
<dbReference type="PANTHER" id="PTHR42818">
    <property type="entry name" value="SULFOPYRUVATE DECARBOXYLASE SUBUNIT ALPHA"/>
    <property type="match status" value="1"/>
</dbReference>
<dbReference type="Pfam" id="PF02775">
    <property type="entry name" value="TPP_enzyme_C"/>
    <property type="match status" value="1"/>
</dbReference>
<dbReference type="Pfam" id="PF02776">
    <property type="entry name" value="TPP_enzyme_N"/>
    <property type="match status" value="1"/>
</dbReference>
<dbReference type="SUPFAM" id="SSF52518">
    <property type="entry name" value="Thiamin diphosphate-binding fold (THDP-binding)"/>
    <property type="match status" value="2"/>
</dbReference>
<reference key="1">
    <citation type="journal article" date="2000" name="Biochim. Biophys. Acta">
        <title>Identification and expression of the gene encoding phosphonopyruvate decarboxylase of Streptomyces hygroscopicus.</title>
        <authorList>
            <person name="Nakashita H."/>
            <person name="Kozuka K."/>
            <person name="Hidaka T."/>
            <person name="Hara O."/>
            <person name="Seto H."/>
        </authorList>
    </citation>
    <scope>NUCLEOTIDE SEQUENCE [GENOMIC DNA]</scope>
    <source>
        <strain>ATCC 21705 / DSM 41527 / SF-1293</strain>
    </source>
</reference>
<reference key="2">
    <citation type="journal article" date="1997" name="J. Antibiot.">
        <title>Studies on the biosynthesis of bialaphos. Biochemical mechanism of C-P bond formation: discovery of phosphonopyruvate decarboxylase which catalyzes the formation of phosphonoacetaldehyde from phosphonopyruvate.</title>
        <authorList>
            <person name="Nakashita H."/>
            <person name="Watanabe K."/>
            <person name="Hara O."/>
            <person name="Hidaka T."/>
            <person name="Seto H."/>
        </authorList>
    </citation>
    <scope>FUNCTION</scope>
    <scope>CATALYTIC ACTIVITY</scope>
    <scope>COFACTOR</scope>
    <scope>PATHWAY</scope>
    <source>
        <strain>E26</strain>
    </source>
</reference>